<keyword id="KW-1185">Reference proteome</keyword>
<dbReference type="EMBL" id="LT708304">
    <property type="protein sequence ID" value="SIU00642.1"/>
    <property type="molecule type" value="Genomic_DNA"/>
</dbReference>
<dbReference type="RefSeq" id="NP_855685.1">
    <property type="nucleotide sequence ID" value="NC_002945.3"/>
</dbReference>
<dbReference type="SMR" id="P64930"/>
<dbReference type="KEGG" id="mbo:BQ2027_MB2035"/>
<dbReference type="PATRIC" id="fig|233413.5.peg.2236"/>
<dbReference type="Proteomes" id="UP000001419">
    <property type="component" value="Chromosome"/>
</dbReference>
<dbReference type="Gene3D" id="3.30.1810.10">
    <property type="entry name" value="YdfO-like"/>
    <property type="match status" value="1"/>
</dbReference>
<dbReference type="InterPro" id="IPR009833">
    <property type="entry name" value="DUF1398"/>
</dbReference>
<dbReference type="InterPro" id="IPR036696">
    <property type="entry name" value="YdfO-like_sf"/>
</dbReference>
<dbReference type="Pfam" id="PF07166">
    <property type="entry name" value="DUF1398"/>
    <property type="match status" value="1"/>
</dbReference>
<dbReference type="SUPFAM" id="SSF160419">
    <property type="entry name" value="YdfO-like"/>
    <property type="match status" value="1"/>
</dbReference>
<name>Y2035_MYCBO</name>
<reference key="1">
    <citation type="journal article" date="2003" name="Proc. Natl. Acad. Sci. U.S.A.">
        <title>The complete genome sequence of Mycobacterium bovis.</title>
        <authorList>
            <person name="Garnier T."/>
            <person name="Eiglmeier K."/>
            <person name="Camus J.-C."/>
            <person name="Medina N."/>
            <person name="Mansoor H."/>
            <person name="Pryor M."/>
            <person name="Duthoy S."/>
            <person name="Grondin S."/>
            <person name="Lacroix C."/>
            <person name="Monsempe C."/>
            <person name="Simon S."/>
            <person name="Harris B."/>
            <person name="Atkin R."/>
            <person name="Doggett J."/>
            <person name="Mayes R."/>
            <person name="Keating L."/>
            <person name="Wheeler P.R."/>
            <person name="Parkhill J."/>
            <person name="Barrell B.G."/>
            <person name="Cole S.T."/>
            <person name="Gordon S.V."/>
            <person name="Hewinson R.G."/>
        </authorList>
    </citation>
    <scope>NUCLEOTIDE SEQUENCE [LARGE SCALE GENOMIC DNA]</scope>
    <source>
        <strain>ATCC BAA-935 / AF2122/97</strain>
    </source>
</reference>
<reference key="2">
    <citation type="journal article" date="2017" name="Genome Announc.">
        <title>Updated reference genome sequence and annotation of Mycobacterium bovis AF2122/97.</title>
        <authorList>
            <person name="Malone K.M."/>
            <person name="Farrell D."/>
            <person name="Stuber T.P."/>
            <person name="Schubert O.T."/>
            <person name="Aebersold R."/>
            <person name="Robbe-Austerman S."/>
            <person name="Gordon S.V."/>
        </authorList>
    </citation>
    <scope>NUCLEOTIDE SEQUENCE [LARGE SCALE GENOMIC DNA]</scope>
    <scope>GENOME REANNOTATION</scope>
    <source>
        <strain>ATCC BAA-935 / AF2122/97</strain>
    </source>
</reference>
<feature type="chain" id="PRO_0000103942" description="Uncharacterized protein Mb2035">
    <location>
        <begin position="1"/>
        <end position="164"/>
    </location>
</feature>
<proteinExistence type="predicted"/>
<gene>
    <name type="ordered locus">BQ2027_MB2035</name>
</gene>
<sequence length="164" mass="18203">MLSKSKRSCRRRETLRIGEKMSAPITNLQAAQRDAIMNRPAVNGFPHLAETLRRAGVRTNTWWLPAMQSLYETDYGPVLDQGVPLIDGVAEVPAFDRTALVTALRADQAGQTSFREFAAAAWRAGVLRYVVDLENRTCTYFGLHDQTYMEHYAAVEPSGGAPTS</sequence>
<organism>
    <name type="scientific">Mycobacterium bovis (strain ATCC BAA-935 / AF2122/97)</name>
    <dbReference type="NCBI Taxonomy" id="233413"/>
    <lineage>
        <taxon>Bacteria</taxon>
        <taxon>Bacillati</taxon>
        <taxon>Actinomycetota</taxon>
        <taxon>Actinomycetes</taxon>
        <taxon>Mycobacteriales</taxon>
        <taxon>Mycobacteriaceae</taxon>
        <taxon>Mycobacterium</taxon>
        <taxon>Mycobacterium tuberculosis complex</taxon>
    </lineage>
</organism>
<protein>
    <recommendedName>
        <fullName>Uncharacterized protein Mb2035</fullName>
    </recommendedName>
</protein>
<accession>P64930</accession>
<accession>A0A1R3Y014</accession>
<accession>Q10845</accession>
<accession>X2BJ94</accession>